<keyword id="KW-0378">Hydrolase</keyword>
<keyword id="KW-0540">Nuclease</keyword>
<keyword id="KW-0843">Virulence</keyword>
<comment type="function">
    <text evidence="1">Cleaves ssRNA, mostly between U:A.</text>
</comment>
<comment type="subunit">
    <text evidence="1">Homodimer.</text>
</comment>
<comment type="similarity">
    <text evidence="2">Belongs to the VapD ribonuclease family.</text>
</comment>
<proteinExistence type="inferred from homology"/>
<gene>
    <name type="primary">vapD</name>
</gene>
<organism>
    <name type="scientific">Dichelobacter nodosus</name>
    <name type="common">Bacteroides nodosus</name>
    <dbReference type="NCBI Taxonomy" id="870"/>
    <lineage>
        <taxon>Bacteria</taxon>
        <taxon>Pseudomonadati</taxon>
        <taxon>Pseudomonadota</taxon>
        <taxon>Gammaproteobacteria</taxon>
        <taxon>Cardiobacteriales</taxon>
        <taxon>Cardiobacteriaceae</taxon>
        <taxon>Dichelobacter</taxon>
    </lineage>
</organism>
<reference key="1">
    <citation type="journal article" date="1991" name="J. Gen. Microbiol.">
        <title>Identification of three gene regions associated with virulence in Dichelobacter nodosus, the causative agent of ovine footrot.</title>
        <authorList>
            <person name="Katz M.E."/>
            <person name="Howarth P.M."/>
            <person name="Yong W.K."/>
            <person name="Riffkin G.G."/>
            <person name="Depiazzi L.J."/>
            <person name="Rood J.I."/>
        </authorList>
    </citation>
    <scope>NUCLEOTIDE SEQUENCE [GENOMIC DNA]</scope>
    <source>
        <strain>A198</strain>
    </source>
</reference>
<reference key="2">
    <citation type="journal article" date="1992" name="Infect. Immun.">
        <title>Molecular characterization of a genomic region associated with virulence in Dichelobacter nodosus.</title>
        <authorList>
            <person name="Katz M.E."/>
            <person name="Rood J.I."/>
            <person name="Strugnell R.A."/>
        </authorList>
    </citation>
    <scope>NUCLEOTIDE SEQUENCE [GENOMIC DNA]</scope>
    <source>
        <strain>A198</strain>
    </source>
</reference>
<reference key="3">
    <citation type="journal article" date="1994" name="J. Bacteriol.">
        <title>Genetic organization of the duplicated vap region of the Dichelobacter nodosus genome.</title>
        <authorList>
            <person name="Katz M.E."/>
            <person name="Wright C.L."/>
            <person name="Gartside T.S."/>
            <person name="Cheetham B.F."/>
            <person name="Doidge C.V."/>
            <person name="Moses E.K."/>
            <person name="Rood J.I."/>
        </authorList>
    </citation>
    <scope>NUCLEOTIDE SEQUENCE [GENOMIC DNA]</scope>
    <source>
        <strain>A198</strain>
    </source>
</reference>
<feature type="chain" id="PRO_0000217270" description="Endoribonuclease VapD">
    <location>
        <begin position="1"/>
        <end position="93"/>
    </location>
</feature>
<accession>Q46565</accession>
<accession>Q46556</accession>
<accession>Q46566</accession>
<accession>Q46570</accession>
<accession>Q46572</accession>
<name>VAPD_DICNO</name>
<dbReference type="EC" id="3.1.-.-"/>
<dbReference type="EMBL" id="L31763">
    <property type="protein sequence ID" value="AAB00950.1"/>
    <property type="molecule type" value="Genomic_DNA"/>
</dbReference>
<dbReference type="EMBL" id="L31763">
    <property type="protein sequence ID" value="AAB00940.1"/>
    <property type="molecule type" value="Genomic_DNA"/>
</dbReference>
<dbReference type="EMBL" id="L22308">
    <property type="protein sequence ID" value="AAA20204.1"/>
    <property type="molecule type" value="Unassigned_DNA"/>
</dbReference>
<dbReference type="EMBL" id="L22307">
    <property type="protein sequence ID" value="AAA20123.1"/>
    <property type="molecule type" value="Unassigned_DNA"/>
</dbReference>
<dbReference type="EMBL" id="M74565">
    <property type="protein sequence ID" value="AAA23348.1"/>
    <property type="molecule type" value="Genomic_DNA"/>
</dbReference>
<dbReference type="PIR" id="A49205">
    <property type="entry name" value="A49205"/>
</dbReference>
<dbReference type="RefSeq" id="WP_012030611.1">
    <property type="nucleotide sequence ID" value="NZ_SRJB01000012.1"/>
</dbReference>
<dbReference type="SMR" id="Q46565"/>
<dbReference type="PATRIC" id="fig|870.4.peg.1264"/>
<dbReference type="OMA" id="HYGEPYN"/>
<dbReference type="GO" id="GO:0004518">
    <property type="term" value="F:nuclease activity"/>
    <property type="evidence" value="ECO:0007669"/>
    <property type="project" value="UniProtKB-KW"/>
</dbReference>
<dbReference type="GO" id="GO:0003723">
    <property type="term" value="F:RNA binding"/>
    <property type="evidence" value="ECO:0007669"/>
    <property type="project" value="InterPro"/>
</dbReference>
<dbReference type="Gene3D" id="3.30.70.240">
    <property type="match status" value="1"/>
</dbReference>
<dbReference type="InterPro" id="IPR016368">
    <property type="entry name" value="VapD"/>
</dbReference>
<dbReference type="InterPro" id="IPR019199">
    <property type="entry name" value="Virulence_VapD/CRISPR_Cas2"/>
</dbReference>
<dbReference type="Pfam" id="PF09827">
    <property type="entry name" value="CRISPR_Cas2"/>
    <property type="match status" value="1"/>
</dbReference>
<dbReference type="PIRSF" id="PIRSF002882">
    <property type="entry name" value="VapD"/>
    <property type="match status" value="1"/>
</dbReference>
<sequence length="93" mass="10590">MYAIAFDLEIAELKKHYGEPYNGAYLEIGKELKAIGFEWTQGSVYLSNDNNLATVYRAISTLSKIDWFKSSVRDIRAFKVEDWSDFTAIVKGA</sequence>
<protein>
    <recommendedName>
        <fullName>Endoribonuclease VapD</fullName>
        <ecNumber>3.1.-.-</ecNumber>
    </recommendedName>
    <alternativeName>
        <fullName>Virulence-associated protein D</fullName>
    </alternativeName>
</protein>
<evidence type="ECO:0000250" key="1"/>
<evidence type="ECO:0000305" key="2"/>